<protein>
    <recommendedName>
        <fullName evidence="1">Glucose-6-phosphate isomerase</fullName>
        <shortName evidence="1">GPI</shortName>
        <ecNumber evidence="1">5.3.1.9</ecNumber>
    </recommendedName>
    <alternativeName>
        <fullName evidence="1">Phosphoglucose isomerase</fullName>
        <shortName evidence="1">PGI</shortName>
    </alternativeName>
    <alternativeName>
        <fullName evidence="1">Phosphohexose isomerase</fullName>
        <shortName evidence="1">PHI</shortName>
    </alternativeName>
</protein>
<feature type="chain" id="PRO_0000180708" description="Glucose-6-phosphate isomerase">
    <location>
        <begin position="1"/>
        <end position="554"/>
    </location>
</feature>
<feature type="active site" description="Proton donor" evidence="1">
    <location>
        <position position="359"/>
    </location>
</feature>
<feature type="active site" evidence="1">
    <location>
        <position position="390"/>
    </location>
</feature>
<feature type="active site" evidence="1">
    <location>
        <position position="518"/>
    </location>
</feature>
<proteinExistence type="inferred from homology"/>
<accession>Q9HV67</accession>
<sequence>MKHHLTPLDATQLDSWRALAAHRQELQDFRMRQAFIDDPERFKRFSFSACGLFLDFSKNLIRQDTIDLLVKLAEEARLSDAIRAMFDGEAINASERRPVLHTALRRPIGDKVLVDGVDVMPEVHRVLHQMTELVGYVHNGLWRGYTEKPITDVVNIGIGGSFLGPQLVSEALLPFAQKGVRCHYLANIDGSEFHELASRLNAETTLFIVSSKSFGTLETLKNAQAARAWYLAQGGTEEELYRHFIAVSSNKEAAIAFGIREENIFPMWDWVGGRYSLWSAIGLPIAMSIGISNFKELLSGAYNMDQHFQTAPFERNIPVLLGLLGVWYGDFWGANSHAILPYDYYLRNITDHLQQLDMESNGKSVRQDGTPVTSGTGPVIWGGVGCNGQHAYHQLLHQGTQLIPADFIVPVSSYNPVADHHQWLYANCLSQSQALMLGKSREEAEAELRAKGLPEAEVQRLAPHKVIPGNRPSNTLVVERISARRLGALIAMYEHKVYVQSILWGINAFDQWGVELGKELGKGVYSRLVGSEETPAEDASTQGLIDFFRGRHRG</sequence>
<evidence type="ECO:0000255" key="1">
    <source>
        <dbReference type="HAMAP-Rule" id="MF_00473"/>
    </source>
</evidence>
<evidence type="ECO:0000305" key="2"/>
<comment type="function">
    <text evidence="1">Catalyzes the reversible isomerization of glucose-6-phosphate to fructose-6-phosphate.</text>
</comment>
<comment type="catalytic activity">
    <reaction evidence="1">
        <text>alpha-D-glucose 6-phosphate = beta-D-fructose 6-phosphate</text>
        <dbReference type="Rhea" id="RHEA:11816"/>
        <dbReference type="ChEBI" id="CHEBI:57634"/>
        <dbReference type="ChEBI" id="CHEBI:58225"/>
        <dbReference type="EC" id="5.3.1.9"/>
    </reaction>
</comment>
<comment type="pathway">
    <text evidence="1">Carbohydrate biosynthesis; gluconeogenesis.</text>
</comment>
<comment type="pathway">
    <text evidence="1">Carbohydrate degradation; glycolysis; D-glyceraldehyde 3-phosphate and glycerone phosphate from D-glucose: step 2/4.</text>
</comment>
<comment type="subcellular location">
    <subcellularLocation>
        <location evidence="1">Cytoplasm</location>
    </subcellularLocation>
</comment>
<comment type="similarity">
    <text evidence="1 2">Belongs to the GPI family.</text>
</comment>
<organism>
    <name type="scientific">Pseudomonas aeruginosa (strain ATCC 15692 / DSM 22644 / CIP 104116 / JCM 14847 / LMG 12228 / 1C / PRS 101 / PAO1)</name>
    <dbReference type="NCBI Taxonomy" id="208964"/>
    <lineage>
        <taxon>Bacteria</taxon>
        <taxon>Pseudomonadati</taxon>
        <taxon>Pseudomonadota</taxon>
        <taxon>Gammaproteobacteria</taxon>
        <taxon>Pseudomonadales</taxon>
        <taxon>Pseudomonadaceae</taxon>
        <taxon>Pseudomonas</taxon>
    </lineage>
</organism>
<keyword id="KW-0963">Cytoplasm</keyword>
<keyword id="KW-0312">Gluconeogenesis</keyword>
<keyword id="KW-0324">Glycolysis</keyword>
<keyword id="KW-0413">Isomerase</keyword>
<keyword id="KW-1185">Reference proteome</keyword>
<reference key="1">
    <citation type="journal article" date="2000" name="Nature">
        <title>Complete genome sequence of Pseudomonas aeruginosa PAO1, an opportunistic pathogen.</title>
        <authorList>
            <person name="Stover C.K."/>
            <person name="Pham X.-Q.T."/>
            <person name="Erwin A.L."/>
            <person name="Mizoguchi S.D."/>
            <person name="Warrener P."/>
            <person name="Hickey M.J."/>
            <person name="Brinkman F.S.L."/>
            <person name="Hufnagle W.O."/>
            <person name="Kowalik D.J."/>
            <person name="Lagrou M."/>
            <person name="Garber R.L."/>
            <person name="Goltry L."/>
            <person name="Tolentino E."/>
            <person name="Westbrock-Wadman S."/>
            <person name="Yuan Y."/>
            <person name="Brody L.L."/>
            <person name="Coulter S.N."/>
            <person name="Folger K.R."/>
            <person name="Kas A."/>
            <person name="Larbig K."/>
            <person name="Lim R.M."/>
            <person name="Smith K.A."/>
            <person name="Spencer D.H."/>
            <person name="Wong G.K.-S."/>
            <person name="Wu Z."/>
            <person name="Paulsen I.T."/>
            <person name="Reizer J."/>
            <person name="Saier M.H. Jr."/>
            <person name="Hancock R.E.W."/>
            <person name="Lory S."/>
            <person name="Olson M.V."/>
        </authorList>
    </citation>
    <scope>NUCLEOTIDE SEQUENCE [LARGE SCALE GENOMIC DNA]</scope>
    <source>
        <strain>ATCC 15692 / DSM 22644 / CIP 104116 / JCM 14847 / LMG 12228 / 1C / PRS 101 / PAO1</strain>
    </source>
</reference>
<dbReference type="EC" id="5.3.1.9" evidence="1"/>
<dbReference type="EMBL" id="AE004091">
    <property type="protein sequence ID" value="AAG08118.1"/>
    <property type="molecule type" value="Genomic_DNA"/>
</dbReference>
<dbReference type="PIR" id="H83053">
    <property type="entry name" value="H83053"/>
</dbReference>
<dbReference type="RefSeq" id="NP_253420.1">
    <property type="nucleotide sequence ID" value="NC_002516.2"/>
</dbReference>
<dbReference type="RefSeq" id="WP_003100194.1">
    <property type="nucleotide sequence ID" value="NZ_QZGE01000018.1"/>
</dbReference>
<dbReference type="SMR" id="Q9HV67"/>
<dbReference type="FunCoup" id="Q9HV67">
    <property type="interactions" value="654"/>
</dbReference>
<dbReference type="STRING" id="208964.PA4732"/>
<dbReference type="PaxDb" id="208964-PA4732"/>
<dbReference type="GeneID" id="881638"/>
<dbReference type="KEGG" id="pae:PA4732"/>
<dbReference type="PATRIC" id="fig|208964.12.peg.4957"/>
<dbReference type="PseudoCAP" id="PA4732"/>
<dbReference type="HOGENOM" id="CLU_017947_3_1_6"/>
<dbReference type="InParanoid" id="Q9HV67"/>
<dbReference type="OrthoDB" id="140919at2"/>
<dbReference type="PhylomeDB" id="Q9HV67"/>
<dbReference type="BioCyc" id="PAER208964:G1FZ6-4842-MONOMER"/>
<dbReference type="UniPathway" id="UPA00109">
    <property type="reaction ID" value="UER00181"/>
</dbReference>
<dbReference type="UniPathway" id="UPA00138"/>
<dbReference type="Proteomes" id="UP000002438">
    <property type="component" value="Chromosome"/>
</dbReference>
<dbReference type="GO" id="GO:0005829">
    <property type="term" value="C:cytosol"/>
    <property type="evidence" value="ECO:0000318"/>
    <property type="project" value="GO_Central"/>
</dbReference>
<dbReference type="GO" id="GO:0097367">
    <property type="term" value="F:carbohydrate derivative binding"/>
    <property type="evidence" value="ECO:0007669"/>
    <property type="project" value="InterPro"/>
</dbReference>
<dbReference type="GO" id="GO:0004347">
    <property type="term" value="F:glucose-6-phosphate isomerase activity"/>
    <property type="evidence" value="ECO:0000318"/>
    <property type="project" value="GO_Central"/>
</dbReference>
<dbReference type="GO" id="GO:0048029">
    <property type="term" value="F:monosaccharide binding"/>
    <property type="evidence" value="ECO:0000318"/>
    <property type="project" value="GO_Central"/>
</dbReference>
<dbReference type="GO" id="GO:0006094">
    <property type="term" value="P:gluconeogenesis"/>
    <property type="evidence" value="ECO:0000318"/>
    <property type="project" value="GO_Central"/>
</dbReference>
<dbReference type="GO" id="GO:0051156">
    <property type="term" value="P:glucose 6-phosphate metabolic process"/>
    <property type="evidence" value="ECO:0000318"/>
    <property type="project" value="GO_Central"/>
</dbReference>
<dbReference type="GO" id="GO:0006096">
    <property type="term" value="P:glycolytic process"/>
    <property type="evidence" value="ECO:0000318"/>
    <property type="project" value="GO_Central"/>
</dbReference>
<dbReference type="CDD" id="cd05015">
    <property type="entry name" value="SIS_PGI_1"/>
    <property type="match status" value="1"/>
</dbReference>
<dbReference type="CDD" id="cd05016">
    <property type="entry name" value="SIS_PGI_2"/>
    <property type="match status" value="1"/>
</dbReference>
<dbReference type="FunFam" id="3.40.50.10490:FF:000018">
    <property type="entry name" value="Glucose-6-phosphate isomerase"/>
    <property type="match status" value="1"/>
</dbReference>
<dbReference type="Gene3D" id="1.10.1390.10">
    <property type="match status" value="1"/>
</dbReference>
<dbReference type="Gene3D" id="3.40.50.10490">
    <property type="entry name" value="Glucose-6-phosphate isomerase like protein, domain 1"/>
    <property type="match status" value="2"/>
</dbReference>
<dbReference type="HAMAP" id="MF_00473">
    <property type="entry name" value="G6P_isomerase"/>
    <property type="match status" value="1"/>
</dbReference>
<dbReference type="InterPro" id="IPR001672">
    <property type="entry name" value="G6P_Isomerase"/>
</dbReference>
<dbReference type="InterPro" id="IPR023096">
    <property type="entry name" value="G6P_Isomerase_C"/>
</dbReference>
<dbReference type="InterPro" id="IPR018189">
    <property type="entry name" value="Phosphoglucose_isomerase_CS"/>
</dbReference>
<dbReference type="InterPro" id="IPR046348">
    <property type="entry name" value="SIS_dom_sf"/>
</dbReference>
<dbReference type="InterPro" id="IPR035476">
    <property type="entry name" value="SIS_PGI_1"/>
</dbReference>
<dbReference type="InterPro" id="IPR035482">
    <property type="entry name" value="SIS_PGI_2"/>
</dbReference>
<dbReference type="NCBIfam" id="NF001211">
    <property type="entry name" value="PRK00179.1"/>
    <property type="match status" value="1"/>
</dbReference>
<dbReference type="PANTHER" id="PTHR11469">
    <property type="entry name" value="GLUCOSE-6-PHOSPHATE ISOMERASE"/>
    <property type="match status" value="1"/>
</dbReference>
<dbReference type="PANTHER" id="PTHR11469:SF1">
    <property type="entry name" value="GLUCOSE-6-PHOSPHATE ISOMERASE"/>
    <property type="match status" value="1"/>
</dbReference>
<dbReference type="Pfam" id="PF00342">
    <property type="entry name" value="PGI"/>
    <property type="match status" value="1"/>
</dbReference>
<dbReference type="PRINTS" id="PR00662">
    <property type="entry name" value="G6PISOMERASE"/>
</dbReference>
<dbReference type="SUPFAM" id="SSF53697">
    <property type="entry name" value="SIS domain"/>
    <property type="match status" value="1"/>
</dbReference>
<dbReference type="PROSITE" id="PS00765">
    <property type="entry name" value="P_GLUCOSE_ISOMERASE_1"/>
    <property type="match status" value="1"/>
</dbReference>
<dbReference type="PROSITE" id="PS00174">
    <property type="entry name" value="P_GLUCOSE_ISOMERASE_2"/>
    <property type="match status" value="1"/>
</dbReference>
<dbReference type="PROSITE" id="PS51463">
    <property type="entry name" value="P_GLUCOSE_ISOMERASE_3"/>
    <property type="match status" value="1"/>
</dbReference>
<name>G6PI_PSEAE</name>
<gene>
    <name evidence="1" type="primary">pgi</name>
    <name type="ordered locus">PA4732</name>
</gene>